<name>PURT_THEKO</name>
<keyword id="KW-0067">ATP-binding</keyword>
<keyword id="KW-0436">Ligase</keyword>
<keyword id="KW-0460">Magnesium</keyword>
<keyword id="KW-0479">Metal-binding</keyword>
<keyword id="KW-0547">Nucleotide-binding</keyword>
<keyword id="KW-0658">Purine biosynthesis</keyword>
<keyword id="KW-1185">Reference proteome</keyword>
<evidence type="ECO:0000255" key="1">
    <source>
        <dbReference type="HAMAP-Rule" id="MF_01643"/>
    </source>
</evidence>
<gene>
    <name evidence="1" type="primary">purT</name>
    <name type="ordered locus">TK0207</name>
</gene>
<dbReference type="EC" id="6.3.1.21" evidence="1"/>
<dbReference type="EMBL" id="AP006878">
    <property type="protein sequence ID" value="BAD84396.1"/>
    <property type="molecule type" value="Genomic_DNA"/>
</dbReference>
<dbReference type="RefSeq" id="WP_011249162.1">
    <property type="nucleotide sequence ID" value="NC_006624.1"/>
</dbReference>
<dbReference type="SMR" id="Q5JFN8"/>
<dbReference type="FunCoup" id="Q5JFN8">
    <property type="interactions" value="61"/>
</dbReference>
<dbReference type="STRING" id="69014.TK0207"/>
<dbReference type="EnsemblBacteria" id="BAD84396">
    <property type="protein sequence ID" value="BAD84396"/>
    <property type="gene ID" value="TK0207"/>
</dbReference>
<dbReference type="GeneID" id="78446711"/>
<dbReference type="KEGG" id="tko:TK0207"/>
<dbReference type="PATRIC" id="fig|69014.16.peg.206"/>
<dbReference type="eggNOG" id="arCOG01598">
    <property type="taxonomic scope" value="Archaea"/>
</dbReference>
<dbReference type="HOGENOM" id="CLU_011534_1_3_2"/>
<dbReference type="InParanoid" id="Q5JFN8"/>
<dbReference type="OrthoDB" id="9299at2157"/>
<dbReference type="PhylomeDB" id="Q5JFN8"/>
<dbReference type="UniPathway" id="UPA00074">
    <property type="reaction ID" value="UER00127"/>
</dbReference>
<dbReference type="Proteomes" id="UP000000536">
    <property type="component" value="Chromosome"/>
</dbReference>
<dbReference type="GO" id="GO:0005829">
    <property type="term" value="C:cytosol"/>
    <property type="evidence" value="ECO:0000318"/>
    <property type="project" value="GO_Central"/>
</dbReference>
<dbReference type="GO" id="GO:0005524">
    <property type="term" value="F:ATP binding"/>
    <property type="evidence" value="ECO:0007669"/>
    <property type="project" value="UniProtKB-UniRule"/>
</dbReference>
<dbReference type="GO" id="GO:0000287">
    <property type="term" value="F:magnesium ion binding"/>
    <property type="evidence" value="ECO:0007669"/>
    <property type="project" value="InterPro"/>
</dbReference>
<dbReference type="GO" id="GO:0043815">
    <property type="term" value="F:phosphoribosylglycinamide formyltransferase 2 activity"/>
    <property type="evidence" value="ECO:0007669"/>
    <property type="project" value="UniProtKB-UniRule"/>
</dbReference>
<dbReference type="GO" id="GO:0004644">
    <property type="term" value="F:phosphoribosylglycinamide formyltransferase activity"/>
    <property type="evidence" value="ECO:0007669"/>
    <property type="project" value="InterPro"/>
</dbReference>
<dbReference type="GO" id="GO:0006189">
    <property type="term" value="P:'de novo' IMP biosynthetic process"/>
    <property type="evidence" value="ECO:0007669"/>
    <property type="project" value="UniProtKB-UniRule"/>
</dbReference>
<dbReference type="FunFam" id="3.30.1490.20:FF:000013">
    <property type="entry name" value="Formate-dependent phosphoribosylglycinamide formyltransferase"/>
    <property type="match status" value="1"/>
</dbReference>
<dbReference type="FunFam" id="3.30.470.20:FF:000035">
    <property type="entry name" value="Formate-dependent phosphoribosylglycinamide formyltransferase"/>
    <property type="match status" value="1"/>
</dbReference>
<dbReference type="FunFam" id="3.40.50.20:FF:000022">
    <property type="entry name" value="Formate-dependent phosphoribosylglycinamide formyltransferase"/>
    <property type="match status" value="1"/>
</dbReference>
<dbReference type="Gene3D" id="3.40.50.20">
    <property type="match status" value="1"/>
</dbReference>
<dbReference type="Gene3D" id="3.30.1490.20">
    <property type="entry name" value="ATP-grasp fold, A domain"/>
    <property type="match status" value="1"/>
</dbReference>
<dbReference type="Gene3D" id="3.30.470.20">
    <property type="entry name" value="ATP-grasp fold, B domain"/>
    <property type="match status" value="1"/>
</dbReference>
<dbReference type="HAMAP" id="MF_01643">
    <property type="entry name" value="PurT"/>
    <property type="match status" value="1"/>
</dbReference>
<dbReference type="InterPro" id="IPR011761">
    <property type="entry name" value="ATP-grasp"/>
</dbReference>
<dbReference type="InterPro" id="IPR003135">
    <property type="entry name" value="ATP-grasp_carboxylate-amine"/>
</dbReference>
<dbReference type="InterPro" id="IPR013815">
    <property type="entry name" value="ATP_grasp_subdomain_1"/>
</dbReference>
<dbReference type="InterPro" id="IPR016185">
    <property type="entry name" value="PreATP-grasp_dom_sf"/>
</dbReference>
<dbReference type="InterPro" id="IPR005862">
    <property type="entry name" value="PurT"/>
</dbReference>
<dbReference type="InterPro" id="IPR054350">
    <property type="entry name" value="PurT/PurK_preATP-grasp"/>
</dbReference>
<dbReference type="InterPro" id="IPR048740">
    <property type="entry name" value="PurT_C"/>
</dbReference>
<dbReference type="InterPro" id="IPR011054">
    <property type="entry name" value="Rudment_hybrid_motif"/>
</dbReference>
<dbReference type="NCBIfam" id="NF006766">
    <property type="entry name" value="PRK09288.1"/>
    <property type="match status" value="1"/>
</dbReference>
<dbReference type="NCBIfam" id="TIGR01142">
    <property type="entry name" value="purT"/>
    <property type="match status" value="1"/>
</dbReference>
<dbReference type="PANTHER" id="PTHR43055">
    <property type="entry name" value="FORMATE-DEPENDENT PHOSPHORIBOSYLGLYCINAMIDE FORMYLTRANSFERASE"/>
    <property type="match status" value="1"/>
</dbReference>
<dbReference type="PANTHER" id="PTHR43055:SF1">
    <property type="entry name" value="FORMATE-DEPENDENT PHOSPHORIBOSYLGLYCINAMIDE FORMYLTRANSFERASE"/>
    <property type="match status" value="1"/>
</dbReference>
<dbReference type="Pfam" id="PF02222">
    <property type="entry name" value="ATP-grasp"/>
    <property type="match status" value="1"/>
</dbReference>
<dbReference type="Pfam" id="PF21244">
    <property type="entry name" value="PurT_C"/>
    <property type="match status" value="1"/>
</dbReference>
<dbReference type="Pfam" id="PF22660">
    <property type="entry name" value="RS_preATP-grasp-like"/>
    <property type="match status" value="1"/>
</dbReference>
<dbReference type="SUPFAM" id="SSF56059">
    <property type="entry name" value="Glutathione synthetase ATP-binding domain-like"/>
    <property type="match status" value="1"/>
</dbReference>
<dbReference type="SUPFAM" id="SSF52440">
    <property type="entry name" value="PreATP-grasp domain"/>
    <property type="match status" value="1"/>
</dbReference>
<dbReference type="SUPFAM" id="SSF51246">
    <property type="entry name" value="Rudiment single hybrid motif"/>
    <property type="match status" value="1"/>
</dbReference>
<dbReference type="PROSITE" id="PS50975">
    <property type="entry name" value="ATP_GRASP"/>
    <property type="match status" value="1"/>
</dbReference>
<comment type="function">
    <text evidence="1">Involved in the de novo purine biosynthesis. Catalyzes the transfer of formate to 5-phospho-ribosyl-glycinamide (GAR), producing 5-phospho-ribosyl-N-formylglycinamide (FGAR). Formate is provided by PurU via hydrolysis of 10-formyl-tetrahydrofolate.</text>
</comment>
<comment type="catalytic activity">
    <reaction evidence="1">
        <text>N(1)-(5-phospho-beta-D-ribosyl)glycinamide + formate + ATP = N(2)-formyl-N(1)-(5-phospho-beta-D-ribosyl)glycinamide + ADP + phosphate + H(+)</text>
        <dbReference type="Rhea" id="RHEA:24829"/>
        <dbReference type="ChEBI" id="CHEBI:15378"/>
        <dbReference type="ChEBI" id="CHEBI:15740"/>
        <dbReference type="ChEBI" id="CHEBI:30616"/>
        <dbReference type="ChEBI" id="CHEBI:43474"/>
        <dbReference type="ChEBI" id="CHEBI:143788"/>
        <dbReference type="ChEBI" id="CHEBI:147286"/>
        <dbReference type="ChEBI" id="CHEBI:456216"/>
        <dbReference type="EC" id="6.3.1.21"/>
    </reaction>
    <physiologicalReaction direction="left-to-right" evidence="1">
        <dbReference type="Rhea" id="RHEA:24830"/>
    </physiologicalReaction>
</comment>
<comment type="pathway">
    <text evidence="1">Purine metabolism; IMP biosynthesis via de novo pathway; N(2)-formyl-N(1)-(5-phospho-D-ribosyl)glycinamide from N(1)-(5-phospho-D-ribosyl)glycinamide (formate route): step 1/1.</text>
</comment>
<comment type="subunit">
    <text evidence="1">Homodimer.</text>
</comment>
<comment type="similarity">
    <text evidence="1">Belongs to the PurK/PurT family.</text>
</comment>
<protein>
    <recommendedName>
        <fullName evidence="1">Formate-dependent phosphoribosylglycinamide formyltransferase</fullName>
        <ecNumber evidence="1">6.3.1.21</ecNumber>
    </recommendedName>
    <alternativeName>
        <fullName evidence="1">5'-phosphoribosylglycinamide transformylase 2</fullName>
    </alternativeName>
    <alternativeName>
        <fullName evidence="1">Formate-dependent GAR transformylase</fullName>
    </alternativeName>
    <alternativeName>
        <fullName evidence="1">GAR transformylase 2</fullName>
        <shortName evidence="1">GART 2</shortName>
    </alternativeName>
    <alternativeName>
        <fullName evidence="1">Non-folate glycinamide ribonucleotide transformylase</fullName>
    </alternativeName>
    <alternativeName>
        <fullName evidence="1">Phosphoribosylglycinamide formyltransferase 2</fullName>
    </alternativeName>
</protein>
<proteinExistence type="inferred from homology"/>
<sequence>MIRPRDELGTATTDSAQKIVLLGSGELGKEIAIEAQRLGVEVIAVDRYANAPAMQIAHRSYVGDMRKADFLFSVVEREKPDAIIPEIEAINLDALFELEKDGYFVVPNAKATWIAMHRERTRETLAREAKVPTSRYTYASTLDELYEACEKIGYPCHTKAIMSSSGKGSYFVKGPEDVPKAWEEAKKKARGSAEKLIVEEHIDFDVEITELAVRHYDENGEVVTTFPKPVGHYQIDGDYHSSWQPAEISERAEREVYRIAKRITDVLGGLGIFGVEMFVKGDKVWANEVSPRPHDTGMVTLASHPTGFSEFGLHLRAVLGLPIPGEWVDGYRLFPMLTPAATHVIKANVSGYSPRFRGLAKALSVPNATVRLFGKPEAYPGRRLGVAIAWDKDVGEAKRKAEMVAHSIELRTRSANWHSQDYEKRKHLL</sequence>
<accession>Q5JFN8</accession>
<organism>
    <name type="scientific">Thermococcus kodakarensis (strain ATCC BAA-918 / JCM 12380 / KOD1)</name>
    <name type="common">Pyrococcus kodakaraensis (strain KOD1)</name>
    <dbReference type="NCBI Taxonomy" id="69014"/>
    <lineage>
        <taxon>Archaea</taxon>
        <taxon>Methanobacteriati</taxon>
        <taxon>Methanobacteriota</taxon>
        <taxon>Thermococci</taxon>
        <taxon>Thermococcales</taxon>
        <taxon>Thermococcaceae</taxon>
        <taxon>Thermococcus</taxon>
    </lineage>
</organism>
<feature type="chain" id="PRO_0000319286" description="Formate-dependent phosphoribosylglycinamide formyltransferase">
    <location>
        <begin position="1"/>
        <end position="429"/>
    </location>
</feature>
<feature type="domain" description="ATP-grasp" evidence="1">
    <location>
        <begin position="123"/>
        <end position="319"/>
    </location>
</feature>
<feature type="binding site" evidence="1">
    <location>
        <begin position="26"/>
        <end position="27"/>
    </location>
    <ligand>
        <name>N(1)-(5-phospho-beta-D-ribosyl)glycinamide</name>
        <dbReference type="ChEBI" id="CHEBI:143788"/>
    </ligand>
</feature>
<feature type="binding site" evidence="1">
    <location>
        <position position="86"/>
    </location>
    <ligand>
        <name>N(1)-(5-phospho-beta-D-ribosyl)glycinamide</name>
        <dbReference type="ChEBI" id="CHEBI:143788"/>
    </ligand>
</feature>
<feature type="binding site" evidence="1">
    <location>
        <position position="118"/>
    </location>
    <ligand>
        <name>ATP</name>
        <dbReference type="ChEBI" id="CHEBI:30616"/>
    </ligand>
</feature>
<feature type="binding site" evidence="1">
    <location>
        <position position="159"/>
    </location>
    <ligand>
        <name>ATP</name>
        <dbReference type="ChEBI" id="CHEBI:30616"/>
    </ligand>
</feature>
<feature type="binding site" evidence="1">
    <location>
        <begin position="199"/>
        <end position="202"/>
    </location>
    <ligand>
        <name>ATP</name>
        <dbReference type="ChEBI" id="CHEBI:30616"/>
    </ligand>
</feature>
<feature type="binding site" evidence="1">
    <location>
        <position position="207"/>
    </location>
    <ligand>
        <name>ATP</name>
        <dbReference type="ChEBI" id="CHEBI:30616"/>
    </ligand>
</feature>
<feature type="binding site" evidence="1">
    <location>
        <position position="276"/>
    </location>
    <ligand>
        <name>Mg(2+)</name>
        <dbReference type="ChEBI" id="CHEBI:18420"/>
    </ligand>
</feature>
<feature type="binding site" evidence="1">
    <location>
        <position position="288"/>
    </location>
    <ligand>
        <name>Mg(2+)</name>
        <dbReference type="ChEBI" id="CHEBI:18420"/>
    </ligand>
</feature>
<feature type="binding site" evidence="1">
    <location>
        <position position="295"/>
    </location>
    <ligand>
        <name>N(1)-(5-phospho-beta-D-ribosyl)glycinamide</name>
        <dbReference type="ChEBI" id="CHEBI:143788"/>
    </ligand>
</feature>
<feature type="binding site" evidence="1">
    <location>
        <position position="375"/>
    </location>
    <ligand>
        <name>N(1)-(5-phospho-beta-D-ribosyl)glycinamide</name>
        <dbReference type="ChEBI" id="CHEBI:143788"/>
    </ligand>
</feature>
<feature type="binding site" evidence="1">
    <location>
        <begin position="382"/>
        <end position="383"/>
    </location>
    <ligand>
        <name>N(1)-(5-phospho-beta-D-ribosyl)glycinamide</name>
        <dbReference type="ChEBI" id="CHEBI:143788"/>
    </ligand>
</feature>
<reference key="1">
    <citation type="journal article" date="2005" name="Genome Res.">
        <title>Complete genome sequence of the hyperthermophilic archaeon Thermococcus kodakaraensis KOD1 and comparison with Pyrococcus genomes.</title>
        <authorList>
            <person name="Fukui T."/>
            <person name="Atomi H."/>
            <person name="Kanai T."/>
            <person name="Matsumi R."/>
            <person name="Fujiwara S."/>
            <person name="Imanaka T."/>
        </authorList>
    </citation>
    <scope>NUCLEOTIDE SEQUENCE [LARGE SCALE GENOMIC DNA]</scope>
    <source>
        <strain>ATCC BAA-918 / JCM 12380 / KOD1</strain>
    </source>
</reference>